<name>VF123_ASFP4</name>
<comment type="subcellular location">
    <subcellularLocation>
        <location evidence="4">Host membrane</location>
        <topology evidence="4">Single-pass membrane protein</topology>
    </subcellularLocation>
    <subcellularLocation>
        <location evidence="1">Virion</location>
    </subcellularLocation>
</comment>
<comment type="induction">
    <text evidence="4">Expressed in the late phase of the viral replicative cycle.</text>
</comment>
<comment type="similarity">
    <text evidence="4">Belongs to the asfivirus CP123L family.</text>
</comment>
<organismHost>
    <name type="scientific">Ornithodoros</name>
    <name type="common">relapsing fever ticks</name>
    <dbReference type="NCBI Taxonomy" id="6937"/>
</organismHost>
<organismHost>
    <name type="scientific">Phacochoerus aethiopicus</name>
    <name type="common">Warthog</name>
    <dbReference type="NCBI Taxonomy" id="85517"/>
</organismHost>
<organismHost>
    <name type="scientific">Phacochoerus africanus</name>
    <name type="common">Warthog</name>
    <dbReference type="NCBI Taxonomy" id="41426"/>
</organismHost>
<organismHost>
    <name type="scientific">Potamochoerus larvatus</name>
    <name type="common">Bushpig</name>
    <dbReference type="NCBI Taxonomy" id="273792"/>
</organismHost>
<organismHost>
    <name type="scientific">Sus scrofa</name>
    <name type="common">Pig</name>
    <dbReference type="NCBI Taxonomy" id="9823"/>
</organismHost>
<protein>
    <recommendedName>
        <fullName>Uncharacterized protein CP123L</fullName>
        <shortName>pCP123L</shortName>
    </recommendedName>
</protein>
<organism>
    <name type="scientific">African swine fever virus (isolate Tick/South Africa/Pretoriuskop Pr4/1996)</name>
    <name type="common">ASFV</name>
    <dbReference type="NCBI Taxonomy" id="561443"/>
    <lineage>
        <taxon>Viruses</taxon>
        <taxon>Varidnaviria</taxon>
        <taxon>Bamfordvirae</taxon>
        <taxon>Nucleocytoviricota</taxon>
        <taxon>Pokkesviricetes</taxon>
        <taxon>Asfuvirales</taxon>
        <taxon>Asfarviridae</taxon>
        <taxon>Asfivirus</taxon>
        <taxon>African swine fever virus</taxon>
    </lineage>
</organism>
<sequence length="123" mass="13976">MPSTGTLVIIFAIVLILCIMLLFFYKTAEAGKSGVLPPPIPPPTPPPPKKKYDHNEYMEKTDLEPEVKKNHRKWANEAEHLISSSVKGLENLDETAFLANHKGHGFRTFDHAKSLFKEFLKKY</sequence>
<gene>
    <name type="ordered locus">Pret-103</name>
</gene>
<evidence type="ECO:0000250" key="1">
    <source>
        <dbReference type="UniProtKB" id="Q65178"/>
    </source>
</evidence>
<evidence type="ECO:0000255" key="2"/>
<evidence type="ECO:0000256" key="3">
    <source>
        <dbReference type="SAM" id="MobiDB-lite"/>
    </source>
</evidence>
<evidence type="ECO:0000305" key="4"/>
<dbReference type="EMBL" id="AY261363">
    <property type="status" value="NOT_ANNOTATED_CDS"/>
    <property type="molecule type" value="Genomic_DNA"/>
</dbReference>
<dbReference type="SMR" id="P0CA28"/>
<dbReference type="Proteomes" id="UP000000859">
    <property type="component" value="Segment"/>
</dbReference>
<dbReference type="GO" id="GO:0033644">
    <property type="term" value="C:host cell membrane"/>
    <property type="evidence" value="ECO:0007669"/>
    <property type="project" value="UniProtKB-SubCell"/>
</dbReference>
<dbReference type="GO" id="GO:0016020">
    <property type="term" value="C:membrane"/>
    <property type="evidence" value="ECO:0007669"/>
    <property type="project" value="UniProtKB-KW"/>
</dbReference>
<dbReference type="GO" id="GO:0044423">
    <property type="term" value="C:virion component"/>
    <property type="evidence" value="ECO:0007669"/>
    <property type="project" value="UniProtKB-KW"/>
</dbReference>
<reference key="1">
    <citation type="submission" date="2003-03" db="EMBL/GenBank/DDBJ databases">
        <title>African swine fever virus genomes.</title>
        <authorList>
            <person name="Kutish G.F."/>
            <person name="Rock D.L."/>
        </authorList>
    </citation>
    <scope>NUCLEOTIDE SEQUENCE [GENOMIC DNA]</scope>
</reference>
<accession>P0CA28</accession>
<keyword id="KW-1043">Host membrane</keyword>
<keyword id="KW-0426">Late protein</keyword>
<keyword id="KW-0472">Membrane</keyword>
<keyword id="KW-0812">Transmembrane</keyword>
<keyword id="KW-1133">Transmembrane helix</keyword>
<keyword id="KW-0946">Virion</keyword>
<proteinExistence type="inferred from homology"/>
<feature type="chain" id="PRO_0000373493" description="Uncharacterized protein CP123L">
    <location>
        <begin position="1"/>
        <end position="123"/>
    </location>
</feature>
<feature type="transmembrane region" description="Helical" evidence="2">
    <location>
        <begin position="5"/>
        <end position="25"/>
    </location>
</feature>
<feature type="region of interest" description="Disordered" evidence="3">
    <location>
        <begin position="32"/>
        <end position="53"/>
    </location>
</feature>
<feature type="compositionally biased region" description="Pro residues" evidence="3">
    <location>
        <begin position="36"/>
        <end position="47"/>
    </location>
</feature>